<gene>
    <name evidence="5" type="primary">Agr2</name>
</gene>
<organism>
    <name type="scientific">Cyclocybe aegerita</name>
    <name type="common">Black poplar mushroom</name>
    <name type="synonym">Agrocybe aegerita</name>
    <dbReference type="NCBI Taxonomy" id="1973307"/>
    <lineage>
        <taxon>Eukaryota</taxon>
        <taxon>Fungi</taxon>
        <taxon>Dikarya</taxon>
        <taxon>Basidiomycota</taxon>
        <taxon>Agaricomycotina</taxon>
        <taxon>Agaricomycetes</taxon>
        <taxon>Agaricomycetidae</taxon>
        <taxon>Agaricales</taxon>
        <taxon>Agaricineae</taxon>
        <taxon>Bolbitiaceae</taxon>
        <taxon>Cyclocybe</taxon>
    </lineage>
</organism>
<protein>
    <recommendedName>
        <fullName evidence="5">viridiflorene synthase Agr2</fullName>
        <ecNumber evidence="4">4.2.3.88</ecNumber>
    </recommendedName>
    <alternativeName>
        <fullName evidence="5">Sesquiterpene synthase Agr2</fullName>
    </alternativeName>
    <alternativeName>
        <fullName evidence="5">Terpene cyclase Agr2</fullName>
    </alternativeName>
</protein>
<keyword id="KW-0456">Lyase</keyword>
<keyword id="KW-0460">Magnesium</keyword>
<keyword id="KW-0479">Metal-binding</keyword>
<keyword id="KW-0732">Signal</keyword>
<name>AGR2_CYCAE</name>
<accession>A0A5Q0QNJ2</accession>
<feature type="signal peptide" evidence="3">
    <location>
        <begin position="1"/>
        <end position="15"/>
    </location>
</feature>
<feature type="chain" id="PRO_5024343511" description="viridiflorene synthase Agr2" evidence="3">
    <location>
        <begin position="16"/>
        <end position="389"/>
    </location>
</feature>
<feature type="short sequence motif" description="DDXXD motif" evidence="1">
    <location>
        <begin position="128"/>
        <end position="132"/>
    </location>
</feature>
<feature type="binding site" evidence="2">
    <location>
        <position position="128"/>
    </location>
    <ligand>
        <name>Mg(2+)</name>
        <dbReference type="ChEBI" id="CHEBI:18420"/>
        <label>1</label>
    </ligand>
</feature>
<feature type="binding site" evidence="2">
    <location>
        <position position="128"/>
    </location>
    <ligand>
        <name>Mg(2+)</name>
        <dbReference type="ChEBI" id="CHEBI:18420"/>
        <label>2</label>
    </ligand>
</feature>
<feature type="binding site" evidence="2">
    <location>
        <position position="263"/>
    </location>
    <ligand>
        <name>Mg(2+)</name>
        <dbReference type="ChEBI" id="CHEBI:18420"/>
        <label>3</label>
    </ligand>
</feature>
<feature type="binding site" evidence="2">
    <location>
        <position position="267"/>
    </location>
    <ligand>
        <name>Mg(2+)</name>
        <dbReference type="ChEBI" id="CHEBI:18420"/>
        <label>3</label>
    </ligand>
</feature>
<feature type="binding site" evidence="2">
    <location>
        <position position="271"/>
    </location>
    <ligand>
        <name>Mg(2+)</name>
        <dbReference type="ChEBI" id="CHEBI:18420"/>
        <label>3</label>
    </ligand>
</feature>
<feature type="binding site" evidence="2">
    <location>
        <position position="360"/>
    </location>
    <ligand>
        <name>(2E,6E)-farnesyl diphosphate</name>
        <dbReference type="ChEBI" id="CHEBI:175763"/>
    </ligand>
</feature>
<feature type="binding site" evidence="2">
    <location>
        <position position="361"/>
    </location>
    <ligand>
        <name>(2E,6E)-farnesyl diphosphate</name>
        <dbReference type="ChEBI" id="CHEBI:175763"/>
    </ligand>
</feature>
<comment type="function">
    <text evidence="4">Terpene cyclase that catalyzes the cyclization of farnesyl diphosphate (FPP) to viridiflorene.</text>
</comment>
<comment type="catalytic activity">
    <reaction evidence="4">
        <text>(2E,6E)-farnesyl diphosphate = viridiflorene + diphosphate</text>
        <dbReference type="Rhea" id="RHEA:31811"/>
        <dbReference type="ChEBI" id="CHEBI:33019"/>
        <dbReference type="ChEBI" id="CHEBI:63444"/>
        <dbReference type="ChEBI" id="CHEBI:175763"/>
        <dbReference type="EC" id="4.2.3.88"/>
    </reaction>
    <physiologicalReaction direction="left-to-right" evidence="4">
        <dbReference type="Rhea" id="RHEA:31812"/>
    </physiologicalReaction>
</comment>
<comment type="cofactor">
    <cofactor>
        <name>Mg(2+)</name>
        <dbReference type="ChEBI" id="CHEBI:18420"/>
    </cofactor>
</comment>
<comment type="domain">
    <text evidence="4">The DDXXD motif is important for the catalytic activity, presumably through binding to Mg(2+).</text>
</comment>
<comment type="similarity">
    <text evidence="6">Belongs to the terpene synthase family.</text>
</comment>
<evidence type="ECO:0000250" key="1">
    <source>
        <dbReference type="UniProtKB" id="P0DL13"/>
    </source>
</evidence>
<evidence type="ECO:0000250" key="2">
    <source>
        <dbReference type="UniProtKB" id="Q9UR08"/>
    </source>
</evidence>
<evidence type="ECO:0000255" key="3"/>
<evidence type="ECO:0000269" key="4">
    <source>
    </source>
</evidence>
<evidence type="ECO:0000303" key="5">
    <source>
    </source>
</evidence>
<evidence type="ECO:0000305" key="6"/>
<reference key="1">
    <citation type="journal article" date="2020" name="ACS Chem. Biol.">
        <title>Agrocybe aegerita serves as a gateway for identifying sesquiterpene biosynthetic enzymes in higher fungi.</title>
        <authorList>
            <person name="Zhang C."/>
            <person name="Chen X."/>
            <person name="Orban A."/>
            <person name="Shukal S."/>
            <person name="Birk F."/>
            <person name="Too H.P."/>
            <person name="Ruehl M."/>
        </authorList>
    </citation>
    <scope>NUCLEOTIDE SEQUENCE [GENOMIC DNA]</scope>
    <scope>FUNCTION</scope>
    <scope>DOMAIN</scope>
    <scope>CATALYTIC ACTIVITY</scope>
    <source>
        <strain>AAE3_05024</strain>
    </source>
</reference>
<reference key="2">
    <citation type="journal article" date="2018" name="BMC Genomics">
        <title>The genome sequence of the commercially cultivated mushroom Agrocybe aegerita reveals a conserved repertoire of fruiting-related genes and a versatile suite of biopolymer-degrading enzymes.</title>
        <authorList>
            <person name="Gupta D.K."/>
            <person name="Ruehl M."/>
            <person name="Mishra B."/>
            <person name="Kleofas V."/>
            <person name="Hofrichter M."/>
            <person name="Herzog R."/>
            <person name="Pecyna M.J."/>
            <person name="Sharma R."/>
            <person name="Kellner H."/>
            <person name="Hennicke F."/>
            <person name="Thines M."/>
        </authorList>
    </citation>
    <scope>NUCLEOTIDE SEQUENCE [LARGE SCALE GENOMIC DNA]</scope>
    <source>
        <strain>AAE3_05024</strain>
    </source>
</reference>
<sequence>MVWDFVLSLFHSLLAAFQTLTSWLTGSFLFNNKMAPAPNPAPVTFILPDLEKTFNSLPDDGLNPHHDVACAESREWFAKYNKKVLGAQMQEFFRRCKFELITSYTYPYVDKEGLRATMDWHNILWFFDEVTDTETGKDAHKSAIITIRTLREPDFDDGSSLCRMVRDFRLSHLSRAGPECTRRFLEHCDVAFHAGAVEAELREKGEVLSIEGYLKLRRETSGARTCFDMAEYLMDIDLPQDMYDDPVFQKGYIAALDLIFLANDLYSYNMEQAKGHNGANVLTVVMKETKLNLQSAADYVGVLCEKLIKQFQEAKSTLENRLAKEKNPAKAAALKDAIRSLVGYGHWVRGNVEWSFETERYFGKKNKEIKKSRVVTLTPTNSVNRALKA</sequence>
<dbReference type="EC" id="4.2.3.88" evidence="4"/>
<dbReference type="EMBL" id="MN146025">
    <property type="protein sequence ID" value="QGA30878.1"/>
    <property type="molecule type" value="Genomic_DNA"/>
</dbReference>
<dbReference type="SMR" id="A0A5Q0QNJ2"/>
<dbReference type="OrthoDB" id="2861623at2759"/>
<dbReference type="GO" id="GO:0046872">
    <property type="term" value="F:metal ion binding"/>
    <property type="evidence" value="ECO:0007669"/>
    <property type="project" value="UniProtKB-KW"/>
</dbReference>
<dbReference type="GO" id="GO:0010333">
    <property type="term" value="F:terpene synthase activity"/>
    <property type="evidence" value="ECO:0007669"/>
    <property type="project" value="InterPro"/>
</dbReference>
<dbReference type="GO" id="GO:0008299">
    <property type="term" value="P:isoprenoid biosynthetic process"/>
    <property type="evidence" value="ECO:0007669"/>
    <property type="project" value="UniProtKB-ARBA"/>
</dbReference>
<dbReference type="Gene3D" id="1.10.600.10">
    <property type="entry name" value="Farnesyl Diphosphate Synthase"/>
    <property type="match status" value="1"/>
</dbReference>
<dbReference type="InterPro" id="IPR008949">
    <property type="entry name" value="Isoprenoid_synthase_dom_sf"/>
</dbReference>
<dbReference type="InterPro" id="IPR034686">
    <property type="entry name" value="Terpene_cyclase-like_2"/>
</dbReference>
<dbReference type="PANTHER" id="PTHR35201:SF4">
    <property type="entry name" value="BETA-PINACENE SYNTHASE-RELATED"/>
    <property type="match status" value="1"/>
</dbReference>
<dbReference type="PANTHER" id="PTHR35201">
    <property type="entry name" value="TERPENE SYNTHASE"/>
    <property type="match status" value="1"/>
</dbReference>
<dbReference type="Pfam" id="PF19086">
    <property type="entry name" value="Terpene_syn_C_2"/>
    <property type="match status" value="1"/>
</dbReference>
<dbReference type="SFLD" id="SFLDS00005">
    <property type="entry name" value="Isoprenoid_Synthase_Type_I"/>
    <property type="match status" value="1"/>
</dbReference>
<dbReference type="SFLD" id="SFLDG01020">
    <property type="entry name" value="Terpene_Cyclase_Like_2"/>
    <property type="match status" value="1"/>
</dbReference>
<dbReference type="SUPFAM" id="SSF48576">
    <property type="entry name" value="Terpenoid synthases"/>
    <property type="match status" value="1"/>
</dbReference>
<proteinExistence type="evidence at protein level"/>